<evidence type="ECO:0000250" key="1"/>
<evidence type="ECO:0000255" key="2"/>
<evidence type="ECO:0000305" key="3"/>
<feature type="chain" id="PRO_0000084705" description="26S proteasome regulatory subunit 6A homolog">
    <location>
        <begin position="1"/>
        <end position="423"/>
    </location>
</feature>
<feature type="binding site" evidence="2">
    <location>
        <begin position="211"/>
        <end position="218"/>
    </location>
    <ligand>
        <name>ATP</name>
        <dbReference type="ChEBI" id="CHEBI:30616"/>
    </ligand>
</feature>
<reference key="1">
    <citation type="journal article" date="1995" name="Plant Mol. Biol.">
        <title>Structure and expression of LeMA-1, a tomato protein belonging to the SEC18-PAS1-CDC48-TBP-1 protein family of putative Mg(2+)-dependent ATPases.</title>
        <authorList>
            <person name="Prombona A."/>
            <person name="Tabler M."/>
            <person name="Providaki M."/>
            <person name="Tsagris M."/>
        </authorList>
    </citation>
    <scope>NUCLEOTIDE SEQUENCE [MRNA]</scope>
    <source>
        <strain>cv. UC82B</strain>
        <tissue>Fruit</tissue>
    </source>
</reference>
<dbReference type="EMBL" id="X74426">
    <property type="protein sequence ID" value="CAA52445.1"/>
    <property type="molecule type" value="mRNA"/>
</dbReference>
<dbReference type="PIR" id="S56672">
    <property type="entry name" value="S56672"/>
</dbReference>
<dbReference type="SMR" id="P54776"/>
<dbReference type="FunCoup" id="P54776">
    <property type="interactions" value="3877"/>
</dbReference>
<dbReference type="STRING" id="4081.P54776"/>
<dbReference type="PaxDb" id="4081-Solyc01g099760.2.1"/>
<dbReference type="eggNOG" id="KOG0652">
    <property type="taxonomic scope" value="Eukaryota"/>
</dbReference>
<dbReference type="InParanoid" id="P54776"/>
<dbReference type="Proteomes" id="UP000004994">
    <property type="component" value="Unplaced"/>
</dbReference>
<dbReference type="ExpressionAtlas" id="P54776">
    <property type="expression patterns" value="baseline and differential"/>
</dbReference>
<dbReference type="GO" id="GO:0005737">
    <property type="term" value="C:cytoplasm"/>
    <property type="evidence" value="ECO:0007669"/>
    <property type="project" value="UniProtKB-SubCell"/>
</dbReference>
<dbReference type="GO" id="GO:0005634">
    <property type="term" value="C:nucleus"/>
    <property type="evidence" value="ECO:0007669"/>
    <property type="project" value="UniProtKB-SubCell"/>
</dbReference>
<dbReference type="GO" id="GO:0008540">
    <property type="term" value="C:proteasome regulatory particle, base subcomplex"/>
    <property type="evidence" value="ECO:0000318"/>
    <property type="project" value="GO_Central"/>
</dbReference>
<dbReference type="GO" id="GO:0005524">
    <property type="term" value="F:ATP binding"/>
    <property type="evidence" value="ECO:0007669"/>
    <property type="project" value="UniProtKB-KW"/>
</dbReference>
<dbReference type="GO" id="GO:0016887">
    <property type="term" value="F:ATP hydrolysis activity"/>
    <property type="evidence" value="ECO:0007669"/>
    <property type="project" value="InterPro"/>
</dbReference>
<dbReference type="GO" id="GO:0036402">
    <property type="term" value="F:proteasome-activating activity"/>
    <property type="evidence" value="ECO:0000318"/>
    <property type="project" value="GO_Central"/>
</dbReference>
<dbReference type="GO" id="GO:0043161">
    <property type="term" value="P:proteasome-mediated ubiquitin-dependent protein catabolic process"/>
    <property type="evidence" value="ECO:0000318"/>
    <property type="project" value="GO_Central"/>
</dbReference>
<dbReference type="FunFam" id="1.10.8.60:FF:000009">
    <property type="entry name" value="26S protease regulatory subunit 6A"/>
    <property type="match status" value="1"/>
</dbReference>
<dbReference type="FunFam" id="2.40.50.140:FF:000076">
    <property type="entry name" value="26S protease regulatory subunit 6A"/>
    <property type="match status" value="1"/>
</dbReference>
<dbReference type="FunFam" id="3.40.50.300:FF:000037">
    <property type="entry name" value="26S protease regulatory subunit 6A"/>
    <property type="match status" value="1"/>
</dbReference>
<dbReference type="Gene3D" id="1.10.8.60">
    <property type="match status" value="1"/>
</dbReference>
<dbReference type="Gene3D" id="2.40.50.140">
    <property type="entry name" value="Nucleic acid-binding proteins"/>
    <property type="match status" value="1"/>
</dbReference>
<dbReference type="Gene3D" id="3.40.50.300">
    <property type="entry name" value="P-loop containing nucleotide triphosphate hydrolases"/>
    <property type="match status" value="1"/>
</dbReference>
<dbReference type="InterPro" id="IPR050221">
    <property type="entry name" value="26S_Proteasome_ATPase"/>
</dbReference>
<dbReference type="InterPro" id="IPR003593">
    <property type="entry name" value="AAA+_ATPase"/>
</dbReference>
<dbReference type="InterPro" id="IPR041569">
    <property type="entry name" value="AAA_lid_3"/>
</dbReference>
<dbReference type="InterPro" id="IPR003959">
    <property type="entry name" value="ATPase_AAA_core"/>
</dbReference>
<dbReference type="InterPro" id="IPR003960">
    <property type="entry name" value="ATPase_AAA_CS"/>
</dbReference>
<dbReference type="InterPro" id="IPR012340">
    <property type="entry name" value="NA-bd_OB-fold"/>
</dbReference>
<dbReference type="InterPro" id="IPR027417">
    <property type="entry name" value="P-loop_NTPase"/>
</dbReference>
<dbReference type="InterPro" id="IPR032501">
    <property type="entry name" value="Prot_ATP_ID_OB_2nd"/>
</dbReference>
<dbReference type="PANTHER" id="PTHR23073">
    <property type="entry name" value="26S PROTEASOME REGULATORY SUBUNIT"/>
    <property type="match status" value="1"/>
</dbReference>
<dbReference type="Pfam" id="PF00004">
    <property type="entry name" value="AAA"/>
    <property type="match status" value="1"/>
</dbReference>
<dbReference type="Pfam" id="PF17862">
    <property type="entry name" value="AAA_lid_3"/>
    <property type="match status" value="1"/>
</dbReference>
<dbReference type="Pfam" id="PF16450">
    <property type="entry name" value="Prot_ATP_ID_OB_C"/>
    <property type="match status" value="1"/>
</dbReference>
<dbReference type="SMART" id="SM00382">
    <property type="entry name" value="AAA"/>
    <property type="match status" value="1"/>
</dbReference>
<dbReference type="SUPFAM" id="SSF52540">
    <property type="entry name" value="P-loop containing nucleoside triphosphate hydrolases"/>
    <property type="match status" value="1"/>
</dbReference>
<dbReference type="PROSITE" id="PS00674">
    <property type="entry name" value="AAA"/>
    <property type="match status" value="1"/>
</dbReference>
<name>PRS6A_SOLLC</name>
<protein>
    <recommendedName>
        <fullName>26S proteasome regulatory subunit 6A homolog</fullName>
    </recommendedName>
    <alternativeName>
        <fullName>LEMA-1</fullName>
    </alternativeName>
    <alternativeName>
        <fullName>Mg(2+)-dependent ATPase 1</fullName>
    </alternativeName>
    <alternativeName>
        <fullName>Tat-binding protein homolog 1</fullName>
        <shortName>TBP-1</shortName>
    </alternativeName>
</protein>
<keyword id="KW-0067">ATP-binding</keyword>
<keyword id="KW-0963">Cytoplasm</keyword>
<keyword id="KW-0547">Nucleotide-binding</keyword>
<keyword id="KW-0539">Nucleus</keyword>
<keyword id="KW-0647">Proteasome</keyword>
<keyword id="KW-1185">Reference proteome</keyword>
<comment type="function">
    <text evidence="1">The 26S proteasome is involved in the ATP-dependent degradation of ubiquitinated proteins. The regulatory (or ATPase) complex confers ATP dependency and substrate specificity to the 26S complex (By similarity).</text>
</comment>
<comment type="subcellular location">
    <subcellularLocation>
        <location evidence="3">Cytoplasm</location>
    </subcellularLocation>
    <subcellularLocation>
        <location evidence="3">Nucleus</location>
    </subcellularLocation>
</comment>
<comment type="similarity">
    <text evidence="3">Belongs to the AAA ATPase family.</text>
</comment>
<accession>P54776</accession>
<proteinExistence type="evidence at transcript level"/>
<organism>
    <name type="scientific">Solanum lycopersicum</name>
    <name type="common">Tomato</name>
    <name type="synonym">Lycopersicon esculentum</name>
    <dbReference type="NCBI Taxonomy" id="4081"/>
    <lineage>
        <taxon>Eukaryota</taxon>
        <taxon>Viridiplantae</taxon>
        <taxon>Streptophyta</taxon>
        <taxon>Embryophyta</taxon>
        <taxon>Tracheophyta</taxon>
        <taxon>Spermatophyta</taxon>
        <taxon>Magnoliopsida</taxon>
        <taxon>eudicotyledons</taxon>
        <taxon>Gunneridae</taxon>
        <taxon>Pentapetalae</taxon>
        <taxon>asterids</taxon>
        <taxon>lamiids</taxon>
        <taxon>Solanales</taxon>
        <taxon>Solanaceae</taxon>
        <taxon>Solanoideae</taxon>
        <taxon>Solaneae</taxon>
        <taxon>Solanum</taxon>
        <taxon>Solanum subgen. Lycopersicon</taxon>
    </lineage>
</organism>
<gene>
    <name type="primary">TBP1</name>
</gene>
<sequence length="423" mass="47505">MATPMAEDSNFEDDQLHAMSTEDIIRASRLLDNEIRIIKEELQRTNLELDSFKEKIKENQEKIKLNKQLPYLVGNIVEILEMNPEEEAEEDGANIDLDSQRKGKCVVLKTSTRQTIFLPVVGLVDPDNLKPGDLVGVNKDSYLILDTLPSEYDSRVKAMEVDEKPTEDYHDIGGLEKQIQELVEAIVLPMTHQERFQKLGVRPPKGVLLYGPPGTGKTLMARACAAQTNATFLKLAGPQLVQMFIGDGAKLVRDAFQLAKEKSPCIIFIDEIDAIGTKRFDSEVSGDREVQRTMLELLNQLDGFSSDDRIKVIAATNRADILDPALMRSGRLDRKIEFPHPTEEARARILQIHSRKMNVNPDVNFEELARSTDDFNGAQLKAVCVEAGMLALRRDATEVTHEDFNEGIIQVQAKKKASLNYYA</sequence>